<protein>
    <recommendedName>
        <fullName evidence="1">Queuine tRNA-ribosyltransferase</fullName>
        <ecNumber evidence="1">2.4.2.29</ecNumber>
    </recommendedName>
    <alternativeName>
        <fullName evidence="1">Guanine insertion enzyme</fullName>
    </alternativeName>
    <alternativeName>
        <fullName evidence="1">tRNA-guanine transglycosylase</fullName>
    </alternativeName>
</protein>
<comment type="function">
    <text evidence="1">Catalyzes the base-exchange of a guanine (G) residue with the queuine precursor 7-aminomethyl-7-deazaguanine (PreQ1) at position 34 (anticodon wobble position) in tRNAs with GU(N) anticodons (tRNA-Asp, -Asn, -His and -Tyr). Catalysis occurs through a double-displacement mechanism. The nucleophile active site attacks the C1' of nucleotide 34 to detach the guanine base from the RNA, forming a covalent enzyme-RNA intermediate. The proton acceptor active site deprotonates the incoming PreQ1, allowing a nucleophilic attack on the C1' of the ribose to form the product. After dissociation, two additional enzymatic reactions on the tRNA convert PreQ1 to queuine (Q), resulting in the hypermodified nucleoside queuosine (7-(((4,5-cis-dihydroxy-2-cyclopenten-1-yl)amino)methyl)-7-deazaguanosine).</text>
</comment>
<comment type="catalytic activity">
    <reaction evidence="1">
        <text>7-aminomethyl-7-carbaguanine + guanosine(34) in tRNA = 7-aminomethyl-7-carbaguanosine(34) in tRNA + guanine</text>
        <dbReference type="Rhea" id="RHEA:24104"/>
        <dbReference type="Rhea" id="RHEA-COMP:10341"/>
        <dbReference type="Rhea" id="RHEA-COMP:10342"/>
        <dbReference type="ChEBI" id="CHEBI:16235"/>
        <dbReference type="ChEBI" id="CHEBI:58703"/>
        <dbReference type="ChEBI" id="CHEBI:74269"/>
        <dbReference type="ChEBI" id="CHEBI:82833"/>
        <dbReference type="EC" id="2.4.2.29"/>
    </reaction>
</comment>
<comment type="pathway">
    <text evidence="1">tRNA modification; tRNA-queuosine biosynthesis.</text>
</comment>
<comment type="subunit">
    <text evidence="1">Homodimer. Within each dimer, one monomer is responsible for RNA recognition and catalysis, while the other monomer binds to the replacement base PreQ1.</text>
</comment>
<comment type="similarity">
    <text evidence="1">Belongs to the queuine tRNA-ribosyltransferase family.</text>
</comment>
<keyword id="KW-0328">Glycosyltransferase</keyword>
<keyword id="KW-0671">Queuosine biosynthesis</keyword>
<keyword id="KW-1185">Reference proteome</keyword>
<keyword id="KW-0808">Transferase</keyword>
<keyword id="KW-0819">tRNA processing</keyword>
<evidence type="ECO:0000255" key="1">
    <source>
        <dbReference type="HAMAP-Rule" id="MF_00168"/>
    </source>
</evidence>
<feature type="chain" id="PRO_0000135511" description="Queuine tRNA-ribosyltransferase">
    <location>
        <begin position="1"/>
        <end position="376"/>
    </location>
</feature>
<feature type="region of interest" description="RNA binding" evidence="1">
    <location>
        <begin position="248"/>
        <end position="254"/>
    </location>
</feature>
<feature type="region of interest" description="RNA binding; important for wobble base 34 recognition" evidence="1">
    <location>
        <begin position="272"/>
        <end position="276"/>
    </location>
</feature>
<feature type="active site" description="Proton acceptor" evidence="1">
    <location>
        <position position="93"/>
    </location>
</feature>
<feature type="active site" description="Nucleophile" evidence="1">
    <location>
        <position position="267"/>
    </location>
</feature>
<feature type="binding site" evidence="1">
    <location>
        <begin position="93"/>
        <end position="97"/>
    </location>
    <ligand>
        <name>substrate</name>
    </ligand>
</feature>
<feature type="binding site" evidence="1">
    <location>
        <position position="147"/>
    </location>
    <ligand>
        <name>substrate</name>
    </ligand>
</feature>
<feature type="binding site" evidence="1">
    <location>
        <position position="190"/>
    </location>
    <ligand>
        <name>substrate</name>
    </ligand>
</feature>
<feature type="binding site" evidence="1">
    <location>
        <position position="217"/>
    </location>
    <ligand>
        <name>substrate</name>
    </ligand>
</feature>
<dbReference type="EC" id="2.4.2.29" evidence="1"/>
<dbReference type="EMBL" id="AL591688">
    <property type="protein sequence ID" value="CAC46165.1"/>
    <property type="molecule type" value="Genomic_DNA"/>
</dbReference>
<dbReference type="RefSeq" id="NP_385692.1">
    <property type="nucleotide sequence ID" value="NC_003047.1"/>
</dbReference>
<dbReference type="RefSeq" id="WP_003529609.1">
    <property type="nucleotide sequence ID" value="NC_003047.1"/>
</dbReference>
<dbReference type="SMR" id="Q92PY4"/>
<dbReference type="EnsemblBacteria" id="CAC46165">
    <property type="protein sequence ID" value="CAC46165"/>
    <property type="gene ID" value="SMc01206"/>
</dbReference>
<dbReference type="GeneID" id="89575914"/>
<dbReference type="KEGG" id="sme:SMc01206"/>
<dbReference type="PATRIC" id="fig|266834.11.peg.3014"/>
<dbReference type="eggNOG" id="COG0343">
    <property type="taxonomic scope" value="Bacteria"/>
</dbReference>
<dbReference type="HOGENOM" id="CLU_022060_0_1_5"/>
<dbReference type="OrthoDB" id="9805417at2"/>
<dbReference type="UniPathway" id="UPA00392"/>
<dbReference type="Proteomes" id="UP000001976">
    <property type="component" value="Chromosome"/>
</dbReference>
<dbReference type="GO" id="GO:0005829">
    <property type="term" value="C:cytosol"/>
    <property type="evidence" value="ECO:0007669"/>
    <property type="project" value="TreeGrafter"/>
</dbReference>
<dbReference type="GO" id="GO:0008479">
    <property type="term" value="F:tRNA-guanosine(34) queuine transglycosylase activity"/>
    <property type="evidence" value="ECO:0007669"/>
    <property type="project" value="UniProtKB-UniRule"/>
</dbReference>
<dbReference type="GO" id="GO:0008616">
    <property type="term" value="P:queuosine biosynthetic process"/>
    <property type="evidence" value="ECO:0007669"/>
    <property type="project" value="UniProtKB-UniRule"/>
</dbReference>
<dbReference type="GO" id="GO:0002099">
    <property type="term" value="P:tRNA wobble guanine modification"/>
    <property type="evidence" value="ECO:0007669"/>
    <property type="project" value="TreeGrafter"/>
</dbReference>
<dbReference type="GO" id="GO:0101030">
    <property type="term" value="P:tRNA-guanine transglycosylation"/>
    <property type="evidence" value="ECO:0007669"/>
    <property type="project" value="InterPro"/>
</dbReference>
<dbReference type="FunFam" id="3.20.20.105:FF:000001">
    <property type="entry name" value="Queuine tRNA-ribosyltransferase"/>
    <property type="match status" value="1"/>
</dbReference>
<dbReference type="Gene3D" id="3.20.20.105">
    <property type="entry name" value="Queuine tRNA-ribosyltransferase-like"/>
    <property type="match status" value="1"/>
</dbReference>
<dbReference type="HAMAP" id="MF_00168">
    <property type="entry name" value="Q_tRNA_Tgt"/>
    <property type="match status" value="1"/>
</dbReference>
<dbReference type="InterPro" id="IPR050076">
    <property type="entry name" value="ArchSynthase1/Queuine_TRR"/>
</dbReference>
<dbReference type="InterPro" id="IPR004803">
    <property type="entry name" value="TGT"/>
</dbReference>
<dbReference type="InterPro" id="IPR036511">
    <property type="entry name" value="TGT-like_sf"/>
</dbReference>
<dbReference type="InterPro" id="IPR002616">
    <property type="entry name" value="tRNA_ribo_trans-like"/>
</dbReference>
<dbReference type="NCBIfam" id="TIGR00430">
    <property type="entry name" value="Q_tRNA_tgt"/>
    <property type="match status" value="1"/>
</dbReference>
<dbReference type="NCBIfam" id="TIGR00449">
    <property type="entry name" value="tgt_general"/>
    <property type="match status" value="1"/>
</dbReference>
<dbReference type="PANTHER" id="PTHR46499">
    <property type="entry name" value="QUEUINE TRNA-RIBOSYLTRANSFERASE"/>
    <property type="match status" value="1"/>
</dbReference>
<dbReference type="PANTHER" id="PTHR46499:SF1">
    <property type="entry name" value="QUEUINE TRNA-RIBOSYLTRANSFERASE"/>
    <property type="match status" value="1"/>
</dbReference>
<dbReference type="Pfam" id="PF01702">
    <property type="entry name" value="TGT"/>
    <property type="match status" value="1"/>
</dbReference>
<dbReference type="SUPFAM" id="SSF51713">
    <property type="entry name" value="tRNA-guanine transglycosylase"/>
    <property type="match status" value="1"/>
</dbReference>
<proteinExistence type="inferred from homology"/>
<sequence length="376" mass="41797">MTETFQFKLLAADGNARRGEVVTPRGTIRTPAFMPVGTVGTVKAMYLDQVRDLGADIILGNTYHLMLRPGAERVARLGGLHKFIRWERPILTDSGGFQVMSLSSLRKLNEQGVTFKSHVDGALYHMSPERSIEIQGLLGSDIQMQLDECVALPAEPDEIERAMEMSLRWAERCKVAFGDQPGKAMFGIVQGGDIPRLRERSALALRDLDLKGYAVGGLAVGEPQEVMLGMLDVTCPVLPADKPRYLMGVGTPDDILKSVAHGIDMFDCVMPTRSGRHGLAFTRYGRINLRNARHAEDTRPLDEQSSCPATRDYSRAYLHHLIRSNESLGGMLLSWNNLAYYQELMAGIRKAIEEGRYTDFMAETMEGWQRGDLPPV</sequence>
<name>TGT_RHIME</name>
<gene>
    <name evidence="1" type="primary">tgt</name>
    <name type="ordered locus">R01586</name>
    <name type="ORF">SMc01206</name>
</gene>
<accession>Q92PY4</accession>
<reference key="1">
    <citation type="journal article" date="2001" name="Proc. Natl. Acad. Sci. U.S.A.">
        <title>Analysis of the chromosome sequence of the legume symbiont Sinorhizobium meliloti strain 1021.</title>
        <authorList>
            <person name="Capela D."/>
            <person name="Barloy-Hubler F."/>
            <person name="Gouzy J."/>
            <person name="Bothe G."/>
            <person name="Ampe F."/>
            <person name="Batut J."/>
            <person name="Boistard P."/>
            <person name="Becker A."/>
            <person name="Boutry M."/>
            <person name="Cadieu E."/>
            <person name="Dreano S."/>
            <person name="Gloux S."/>
            <person name="Godrie T."/>
            <person name="Goffeau A."/>
            <person name="Kahn D."/>
            <person name="Kiss E."/>
            <person name="Lelaure V."/>
            <person name="Masuy D."/>
            <person name="Pohl T."/>
            <person name="Portetelle D."/>
            <person name="Puehler A."/>
            <person name="Purnelle B."/>
            <person name="Ramsperger U."/>
            <person name="Renard C."/>
            <person name="Thebault P."/>
            <person name="Vandenbol M."/>
            <person name="Weidner S."/>
            <person name="Galibert F."/>
        </authorList>
    </citation>
    <scope>NUCLEOTIDE SEQUENCE [LARGE SCALE GENOMIC DNA]</scope>
    <source>
        <strain>1021</strain>
    </source>
</reference>
<reference key="2">
    <citation type="journal article" date="2001" name="Science">
        <title>The composite genome of the legume symbiont Sinorhizobium meliloti.</title>
        <authorList>
            <person name="Galibert F."/>
            <person name="Finan T.M."/>
            <person name="Long S.R."/>
            <person name="Puehler A."/>
            <person name="Abola P."/>
            <person name="Ampe F."/>
            <person name="Barloy-Hubler F."/>
            <person name="Barnett M.J."/>
            <person name="Becker A."/>
            <person name="Boistard P."/>
            <person name="Bothe G."/>
            <person name="Boutry M."/>
            <person name="Bowser L."/>
            <person name="Buhrmester J."/>
            <person name="Cadieu E."/>
            <person name="Capela D."/>
            <person name="Chain P."/>
            <person name="Cowie A."/>
            <person name="Davis R.W."/>
            <person name="Dreano S."/>
            <person name="Federspiel N.A."/>
            <person name="Fisher R.F."/>
            <person name="Gloux S."/>
            <person name="Godrie T."/>
            <person name="Goffeau A."/>
            <person name="Golding B."/>
            <person name="Gouzy J."/>
            <person name="Gurjal M."/>
            <person name="Hernandez-Lucas I."/>
            <person name="Hong A."/>
            <person name="Huizar L."/>
            <person name="Hyman R.W."/>
            <person name="Jones T."/>
            <person name="Kahn D."/>
            <person name="Kahn M.L."/>
            <person name="Kalman S."/>
            <person name="Keating D.H."/>
            <person name="Kiss E."/>
            <person name="Komp C."/>
            <person name="Lelaure V."/>
            <person name="Masuy D."/>
            <person name="Palm C."/>
            <person name="Peck M.C."/>
            <person name="Pohl T.M."/>
            <person name="Portetelle D."/>
            <person name="Purnelle B."/>
            <person name="Ramsperger U."/>
            <person name="Surzycki R."/>
            <person name="Thebault P."/>
            <person name="Vandenbol M."/>
            <person name="Vorhoelter F.J."/>
            <person name="Weidner S."/>
            <person name="Wells D.H."/>
            <person name="Wong K."/>
            <person name="Yeh K.-C."/>
            <person name="Batut J."/>
        </authorList>
    </citation>
    <scope>NUCLEOTIDE SEQUENCE [LARGE SCALE GENOMIC DNA]</scope>
    <source>
        <strain>1021</strain>
    </source>
</reference>
<organism>
    <name type="scientific">Rhizobium meliloti (strain 1021)</name>
    <name type="common">Ensifer meliloti</name>
    <name type="synonym">Sinorhizobium meliloti</name>
    <dbReference type="NCBI Taxonomy" id="266834"/>
    <lineage>
        <taxon>Bacteria</taxon>
        <taxon>Pseudomonadati</taxon>
        <taxon>Pseudomonadota</taxon>
        <taxon>Alphaproteobacteria</taxon>
        <taxon>Hyphomicrobiales</taxon>
        <taxon>Rhizobiaceae</taxon>
        <taxon>Sinorhizobium/Ensifer group</taxon>
        <taxon>Sinorhizobium</taxon>
    </lineage>
</organism>